<reference key="1">
    <citation type="journal article" date="2009" name="J. Bacteriol.">
        <title>Role of conjugative elements in the evolution of the multidrug-resistant pandemic clone Streptococcus pneumoniae Spain23F ST81.</title>
        <authorList>
            <person name="Croucher N.J."/>
            <person name="Walker D."/>
            <person name="Romero P."/>
            <person name="Lennard N."/>
            <person name="Paterson G.K."/>
            <person name="Bason N.C."/>
            <person name="Mitchell A.M."/>
            <person name="Quail M.A."/>
            <person name="Andrew P.W."/>
            <person name="Parkhill J."/>
            <person name="Bentley S.D."/>
            <person name="Mitchell T.J."/>
        </authorList>
    </citation>
    <scope>NUCLEOTIDE SEQUENCE [LARGE SCALE GENOMIC DNA]</scope>
    <source>
        <strain>ATCC 700669 / Spain 23F-1</strain>
    </source>
</reference>
<gene>
    <name evidence="1" type="primary">acpS</name>
    <name type="ordered locus">SPN23F16980</name>
</gene>
<comment type="function">
    <text evidence="1">Transfers the 4'-phosphopantetheine moiety from coenzyme A to a Ser of acyl-carrier-protein.</text>
</comment>
<comment type="catalytic activity">
    <reaction evidence="1">
        <text>apo-[ACP] + CoA = holo-[ACP] + adenosine 3',5'-bisphosphate + H(+)</text>
        <dbReference type="Rhea" id="RHEA:12068"/>
        <dbReference type="Rhea" id="RHEA-COMP:9685"/>
        <dbReference type="Rhea" id="RHEA-COMP:9690"/>
        <dbReference type="ChEBI" id="CHEBI:15378"/>
        <dbReference type="ChEBI" id="CHEBI:29999"/>
        <dbReference type="ChEBI" id="CHEBI:57287"/>
        <dbReference type="ChEBI" id="CHEBI:58343"/>
        <dbReference type="ChEBI" id="CHEBI:64479"/>
        <dbReference type="EC" id="2.7.8.7"/>
    </reaction>
</comment>
<comment type="cofactor">
    <cofactor evidence="1">
        <name>Mg(2+)</name>
        <dbReference type="ChEBI" id="CHEBI:18420"/>
    </cofactor>
</comment>
<comment type="subcellular location">
    <subcellularLocation>
        <location evidence="1">Cytoplasm</location>
    </subcellularLocation>
</comment>
<comment type="similarity">
    <text evidence="1">Belongs to the P-Pant transferase superfamily. AcpS family.</text>
</comment>
<proteinExistence type="inferred from homology"/>
<accession>B8ZMG2</accession>
<name>ACPS_STRPJ</name>
<protein>
    <recommendedName>
        <fullName evidence="1">Holo-[acyl-carrier-protein] synthase</fullName>
        <shortName evidence="1">Holo-ACP synthase</shortName>
        <ecNumber evidence="1">2.7.8.7</ecNumber>
    </recommendedName>
    <alternativeName>
        <fullName evidence="1">4'-phosphopantetheinyl transferase AcpS</fullName>
    </alternativeName>
</protein>
<keyword id="KW-0963">Cytoplasm</keyword>
<keyword id="KW-0275">Fatty acid biosynthesis</keyword>
<keyword id="KW-0276">Fatty acid metabolism</keyword>
<keyword id="KW-0444">Lipid biosynthesis</keyword>
<keyword id="KW-0443">Lipid metabolism</keyword>
<keyword id="KW-0460">Magnesium</keyword>
<keyword id="KW-0479">Metal-binding</keyword>
<keyword id="KW-0808">Transferase</keyword>
<organism>
    <name type="scientific">Streptococcus pneumoniae (strain ATCC 700669 / Spain 23F-1)</name>
    <dbReference type="NCBI Taxonomy" id="561276"/>
    <lineage>
        <taxon>Bacteria</taxon>
        <taxon>Bacillati</taxon>
        <taxon>Bacillota</taxon>
        <taxon>Bacilli</taxon>
        <taxon>Lactobacillales</taxon>
        <taxon>Streptococcaceae</taxon>
        <taxon>Streptococcus</taxon>
    </lineage>
</organism>
<sequence>MIVGHGIDIEELASIESAVTRHEGFAKRVLTAQEMERFTSLKGRRQIEYLAGRWSAKEAFSKAMGTGISKLGFQDLEVLNNERGAPYFSQAPFSGKIWLSISHTDQFVTASVILEENHES</sequence>
<evidence type="ECO:0000255" key="1">
    <source>
        <dbReference type="HAMAP-Rule" id="MF_00101"/>
    </source>
</evidence>
<dbReference type="EC" id="2.7.8.7" evidence="1"/>
<dbReference type="EMBL" id="FM211187">
    <property type="protein sequence ID" value="CAR69469.1"/>
    <property type="molecule type" value="Genomic_DNA"/>
</dbReference>
<dbReference type="RefSeq" id="WP_000635008.1">
    <property type="nucleotide sequence ID" value="NC_011900.1"/>
</dbReference>
<dbReference type="SMR" id="B8ZMG2"/>
<dbReference type="KEGG" id="sne:SPN23F16980"/>
<dbReference type="HOGENOM" id="CLU_089696_1_2_9"/>
<dbReference type="GO" id="GO:0005829">
    <property type="term" value="C:cytosol"/>
    <property type="evidence" value="ECO:0007669"/>
    <property type="project" value="TreeGrafter"/>
</dbReference>
<dbReference type="GO" id="GO:0008897">
    <property type="term" value="F:holo-[acyl-carrier-protein] synthase activity"/>
    <property type="evidence" value="ECO:0007669"/>
    <property type="project" value="UniProtKB-UniRule"/>
</dbReference>
<dbReference type="GO" id="GO:0000287">
    <property type="term" value="F:magnesium ion binding"/>
    <property type="evidence" value="ECO:0007669"/>
    <property type="project" value="UniProtKB-UniRule"/>
</dbReference>
<dbReference type="GO" id="GO:0006633">
    <property type="term" value="P:fatty acid biosynthetic process"/>
    <property type="evidence" value="ECO:0007669"/>
    <property type="project" value="UniProtKB-UniRule"/>
</dbReference>
<dbReference type="GO" id="GO:0019878">
    <property type="term" value="P:lysine biosynthetic process via aminoadipic acid"/>
    <property type="evidence" value="ECO:0007669"/>
    <property type="project" value="TreeGrafter"/>
</dbReference>
<dbReference type="Gene3D" id="3.90.470.20">
    <property type="entry name" value="4'-phosphopantetheinyl transferase domain"/>
    <property type="match status" value="1"/>
</dbReference>
<dbReference type="HAMAP" id="MF_00101">
    <property type="entry name" value="AcpS"/>
    <property type="match status" value="1"/>
</dbReference>
<dbReference type="InterPro" id="IPR008278">
    <property type="entry name" value="4-PPantetheinyl_Trfase_dom"/>
</dbReference>
<dbReference type="InterPro" id="IPR037143">
    <property type="entry name" value="4-PPantetheinyl_Trfase_dom_sf"/>
</dbReference>
<dbReference type="InterPro" id="IPR002582">
    <property type="entry name" value="ACPS"/>
</dbReference>
<dbReference type="InterPro" id="IPR050559">
    <property type="entry name" value="P-Pant_transferase_sf"/>
</dbReference>
<dbReference type="InterPro" id="IPR004568">
    <property type="entry name" value="Ppantetheine-prot_Trfase_dom"/>
</dbReference>
<dbReference type="NCBIfam" id="TIGR00516">
    <property type="entry name" value="acpS"/>
    <property type="match status" value="1"/>
</dbReference>
<dbReference type="NCBIfam" id="TIGR00556">
    <property type="entry name" value="pantethn_trn"/>
    <property type="match status" value="1"/>
</dbReference>
<dbReference type="PANTHER" id="PTHR12215:SF10">
    <property type="entry name" value="L-AMINOADIPATE-SEMIALDEHYDE DEHYDROGENASE-PHOSPHOPANTETHEINYL TRANSFERASE"/>
    <property type="match status" value="1"/>
</dbReference>
<dbReference type="PANTHER" id="PTHR12215">
    <property type="entry name" value="PHOSPHOPANTETHEINE TRANSFERASE"/>
    <property type="match status" value="1"/>
</dbReference>
<dbReference type="Pfam" id="PF01648">
    <property type="entry name" value="ACPS"/>
    <property type="match status" value="1"/>
</dbReference>
<dbReference type="SUPFAM" id="SSF56214">
    <property type="entry name" value="4'-phosphopantetheinyl transferase"/>
    <property type="match status" value="1"/>
</dbReference>
<feature type="chain" id="PRO_1000118828" description="Holo-[acyl-carrier-protein] synthase">
    <location>
        <begin position="1"/>
        <end position="120"/>
    </location>
</feature>
<feature type="binding site" evidence="1">
    <location>
        <position position="8"/>
    </location>
    <ligand>
        <name>Mg(2+)</name>
        <dbReference type="ChEBI" id="CHEBI:18420"/>
    </ligand>
</feature>
<feature type="binding site" evidence="1">
    <location>
        <position position="58"/>
    </location>
    <ligand>
        <name>Mg(2+)</name>
        <dbReference type="ChEBI" id="CHEBI:18420"/>
    </ligand>
</feature>